<gene>
    <name evidence="1" type="primary">rpoZ</name>
    <name type="ordered locus">BruAb1_0668</name>
</gene>
<evidence type="ECO:0000255" key="1">
    <source>
        <dbReference type="HAMAP-Rule" id="MF_00366"/>
    </source>
</evidence>
<organism>
    <name type="scientific">Brucella abortus biovar 1 (strain 9-941)</name>
    <dbReference type="NCBI Taxonomy" id="262698"/>
    <lineage>
        <taxon>Bacteria</taxon>
        <taxon>Pseudomonadati</taxon>
        <taxon>Pseudomonadota</taxon>
        <taxon>Alphaproteobacteria</taxon>
        <taxon>Hyphomicrobiales</taxon>
        <taxon>Brucellaceae</taxon>
        <taxon>Brucella/Ochrobactrum group</taxon>
        <taxon>Brucella</taxon>
    </lineage>
</organism>
<accession>Q57E91</accession>
<comment type="function">
    <text evidence="1">Promotes RNA polymerase assembly. Latches the N- and C-terminal regions of the beta' subunit thereby facilitating its interaction with the beta and alpha subunits.</text>
</comment>
<comment type="catalytic activity">
    <reaction evidence="1">
        <text>RNA(n) + a ribonucleoside 5'-triphosphate = RNA(n+1) + diphosphate</text>
        <dbReference type="Rhea" id="RHEA:21248"/>
        <dbReference type="Rhea" id="RHEA-COMP:14527"/>
        <dbReference type="Rhea" id="RHEA-COMP:17342"/>
        <dbReference type="ChEBI" id="CHEBI:33019"/>
        <dbReference type="ChEBI" id="CHEBI:61557"/>
        <dbReference type="ChEBI" id="CHEBI:140395"/>
        <dbReference type="EC" id="2.7.7.6"/>
    </reaction>
</comment>
<comment type="subunit">
    <text evidence="1">The RNAP catalytic core consists of 2 alpha, 1 beta, 1 beta' and 1 omega subunit. When a sigma factor is associated with the core the holoenzyme is formed, which can initiate transcription.</text>
</comment>
<comment type="similarity">
    <text evidence="1">Belongs to the RNA polymerase subunit omega family.</text>
</comment>
<sequence>MARVTVEDCVDKVENRFELVLLAGHRARQISQGAPITVDRDNDKNPVVALREIADETLSPDDLKEDLIHSLQKHVEVDEPEAAPAQIANAAEEIAEGIAEAGEEDVVTFDRMSEEELLAGIEGLVAPEKNDGF</sequence>
<feature type="chain" id="PRO_0000237440" description="DNA-directed RNA polymerase subunit omega">
    <location>
        <begin position="1"/>
        <end position="133"/>
    </location>
</feature>
<proteinExistence type="inferred from homology"/>
<dbReference type="EC" id="2.7.7.6" evidence="1"/>
<dbReference type="EMBL" id="AE017223">
    <property type="protein sequence ID" value="AAX74043.1"/>
    <property type="molecule type" value="Genomic_DNA"/>
</dbReference>
<dbReference type="RefSeq" id="WP_002963795.1">
    <property type="nucleotide sequence ID" value="NC_006932.1"/>
</dbReference>
<dbReference type="SMR" id="Q57E91"/>
<dbReference type="EnsemblBacteria" id="AAX74043">
    <property type="protein sequence ID" value="AAX74043"/>
    <property type="gene ID" value="BruAb1_0668"/>
</dbReference>
<dbReference type="GeneID" id="93016943"/>
<dbReference type="KEGG" id="bmb:BruAb1_0668"/>
<dbReference type="HOGENOM" id="CLU_125406_2_0_5"/>
<dbReference type="Proteomes" id="UP000000540">
    <property type="component" value="Chromosome I"/>
</dbReference>
<dbReference type="GO" id="GO:0000428">
    <property type="term" value="C:DNA-directed RNA polymerase complex"/>
    <property type="evidence" value="ECO:0007669"/>
    <property type="project" value="UniProtKB-KW"/>
</dbReference>
<dbReference type="GO" id="GO:0003677">
    <property type="term" value="F:DNA binding"/>
    <property type="evidence" value="ECO:0007669"/>
    <property type="project" value="UniProtKB-UniRule"/>
</dbReference>
<dbReference type="GO" id="GO:0003899">
    <property type="term" value="F:DNA-directed RNA polymerase activity"/>
    <property type="evidence" value="ECO:0007669"/>
    <property type="project" value="UniProtKB-UniRule"/>
</dbReference>
<dbReference type="GO" id="GO:0006351">
    <property type="term" value="P:DNA-templated transcription"/>
    <property type="evidence" value="ECO:0007669"/>
    <property type="project" value="UniProtKB-UniRule"/>
</dbReference>
<dbReference type="Gene3D" id="3.90.940.10">
    <property type="match status" value="1"/>
</dbReference>
<dbReference type="HAMAP" id="MF_00366">
    <property type="entry name" value="RNApol_bact_RpoZ"/>
    <property type="match status" value="1"/>
</dbReference>
<dbReference type="InterPro" id="IPR003716">
    <property type="entry name" value="DNA-dir_RNA_pol_omega"/>
</dbReference>
<dbReference type="InterPro" id="IPR006110">
    <property type="entry name" value="Pol_omega/Rpo6/RPB6"/>
</dbReference>
<dbReference type="InterPro" id="IPR036161">
    <property type="entry name" value="RPB6/omega-like_sf"/>
</dbReference>
<dbReference type="NCBIfam" id="TIGR00690">
    <property type="entry name" value="rpoZ"/>
    <property type="match status" value="1"/>
</dbReference>
<dbReference type="PANTHER" id="PTHR34476">
    <property type="entry name" value="DNA-DIRECTED RNA POLYMERASE SUBUNIT OMEGA"/>
    <property type="match status" value="1"/>
</dbReference>
<dbReference type="PANTHER" id="PTHR34476:SF1">
    <property type="entry name" value="DNA-DIRECTED RNA POLYMERASE SUBUNIT OMEGA"/>
    <property type="match status" value="1"/>
</dbReference>
<dbReference type="Pfam" id="PF01192">
    <property type="entry name" value="RNA_pol_Rpb6"/>
    <property type="match status" value="1"/>
</dbReference>
<dbReference type="SMART" id="SM01409">
    <property type="entry name" value="RNA_pol_Rpb6"/>
    <property type="match status" value="1"/>
</dbReference>
<dbReference type="SUPFAM" id="SSF63562">
    <property type="entry name" value="RPB6/omega subunit-like"/>
    <property type="match status" value="1"/>
</dbReference>
<keyword id="KW-0240">DNA-directed RNA polymerase</keyword>
<keyword id="KW-0548">Nucleotidyltransferase</keyword>
<keyword id="KW-0804">Transcription</keyword>
<keyword id="KW-0808">Transferase</keyword>
<reference key="1">
    <citation type="journal article" date="2005" name="J. Bacteriol.">
        <title>Completion of the genome sequence of Brucella abortus and comparison to the highly similar genomes of Brucella melitensis and Brucella suis.</title>
        <authorList>
            <person name="Halling S.M."/>
            <person name="Peterson-Burch B.D."/>
            <person name="Bricker B.J."/>
            <person name="Zuerner R.L."/>
            <person name="Qing Z."/>
            <person name="Li L.-L."/>
            <person name="Kapur V."/>
            <person name="Alt D.P."/>
            <person name="Olsen S.C."/>
        </authorList>
    </citation>
    <scope>NUCLEOTIDE SEQUENCE [LARGE SCALE GENOMIC DNA]</scope>
    <source>
        <strain>9-941</strain>
    </source>
</reference>
<protein>
    <recommendedName>
        <fullName evidence="1">DNA-directed RNA polymerase subunit omega</fullName>
        <shortName evidence="1">RNAP omega subunit</shortName>
        <ecNumber evidence="1">2.7.7.6</ecNumber>
    </recommendedName>
    <alternativeName>
        <fullName evidence="1">RNA polymerase omega subunit</fullName>
    </alternativeName>
    <alternativeName>
        <fullName evidence="1">Transcriptase subunit omega</fullName>
    </alternativeName>
</protein>
<name>RPOZ_BRUAB</name>